<sequence length="216" mass="23224">MAAPAPAPRILVLLLLLLPAPEGAQSELCMISHGRKVDPWVCPDFCCGNCNDQYCCSDVLKQVMWIEEDCHAPEASILTDDFDSGFDSDPVARFGTVIAIGVTLFVIAVVTVIVCCTCSCCCLYKMCRRPQPVVTTTMATTVTHTPYLQPPSYPGPTYQGYHSVVPQPGMPTAPYPTQPTGPPAYHETMAGGAALPYPASQPPYNPAYMEPPKAVP</sequence>
<dbReference type="EMBL" id="BC102472">
    <property type="protein sequence ID" value="AAI02473.1"/>
    <property type="molecule type" value="mRNA"/>
</dbReference>
<dbReference type="RefSeq" id="NP_001030563.1">
    <property type="nucleotide sequence ID" value="NM_001035486.2"/>
</dbReference>
<dbReference type="FunCoup" id="Q3T0A9">
    <property type="interactions" value="463"/>
</dbReference>
<dbReference type="STRING" id="9913.ENSBTAP00000057127"/>
<dbReference type="PaxDb" id="9913-ENSBTAP00000012101"/>
<dbReference type="Ensembl" id="ENSBTAT00000098388.1">
    <property type="protein sequence ID" value="ENSBTAP00000102046.1"/>
    <property type="gene ID" value="ENSBTAG00000009183.7"/>
</dbReference>
<dbReference type="GeneID" id="616861"/>
<dbReference type="KEGG" id="bta:616861"/>
<dbReference type="CTD" id="51246"/>
<dbReference type="VEuPathDB" id="HostDB:ENSBTAG00000009183"/>
<dbReference type="VGNC" id="VGNC:34601">
    <property type="gene designation" value="SHISA5"/>
</dbReference>
<dbReference type="eggNOG" id="ENOG502S2Y4">
    <property type="taxonomic scope" value="Eukaryota"/>
</dbReference>
<dbReference type="GeneTree" id="ENSGT00390000008296"/>
<dbReference type="InParanoid" id="Q3T0A9"/>
<dbReference type="OMA" id="YKACRRQ"/>
<dbReference type="OrthoDB" id="9949323at2759"/>
<dbReference type="Reactome" id="R-BTA-381426">
    <property type="pathway name" value="Regulation of Insulin-like Growth Factor (IGF) transport and uptake by Insulin-like Growth Factor Binding Proteins (IGFBPs)"/>
</dbReference>
<dbReference type="Reactome" id="R-BTA-8957275">
    <property type="pathway name" value="Post-translational protein phosphorylation"/>
</dbReference>
<dbReference type="Proteomes" id="UP000009136">
    <property type="component" value="Chromosome 22"/>
</dbReference>
<dbReference type="Bgee" id="ENSBTAG00000009183">
    <property type="expression patterns" value="Expressed in olfactory segment of nasal mucosa and 103 other cell types or tissues"/>
</dbReference>
<dbReference type="GO" id="GO:0005783">
    <property type="term" value="C:endoplasmic reticulum"/>
    <property type="evidence" value="ECO:0000318"/>
    <property type="project" value="GO_Central"/>
</dbReference>
<dbReference type="GO" id="GO:0005789">
    <property type="term" value="C:endoplasmic reticulum membrane"/>
    <property type="evidence" value="ECO:0007669"/>
    <property type="project" value="UniProtKB-SubCell"/>
</dbReference>
<dbReference type="GO" id="GO:0031965">
    <property type="term" value="C:nuclear membrane"/>
    <property type="evidence" value="ECO:0007669"/>
    <property type="project" value="UniProtKB-SubCell"/>
</dbReference>
<dbReference type="GO" id="GO:0006915">
    <property type="term" value="P:apoptotic process"/>
    <property type="evidence" value="ECO:0007669"/>
    <property type="project" value="UniProtKB-KW"/>
</dbReference>
<dbReference type="InterPro" id="IPR026910">
    <property type="entry name" value="Shisa"/>
</dbReference>
<dbReference type="InterPro" id="IPR053891">
    <property type="entry name" value="Shisa_N"/>
</dbReference>
<dbReference type="PANTHER" id="PTHR31395:SF14">
    <property type="entry name" value="PROTEIN SHISA-5"/>
    <property type="match status" value="1"/>
</dbReference>
<dbReference type="PANTHER" id="PTHR31395">
    <property type="entry name" value="SHISA"/>
    <property type="match status" value="1"/>
</dbReference>
<dbReference type="Pfam" id="PF13908">
    <property type="entry name" value="Shisa_N"/>
    <property type="match status" value="1"/>
</dbReference>
<comment type="function">
    <text evidence="1">Can induce apoptosis in a caspase-dependent manner and plays a role in p53/TP53-dependent apoptosis.</text>
</comment>
<comment type="subunit">
    <text evidence="1">Interacts with PDCD6; PDCD6 can stabilize SHISA5.</text>
</comment>
<comment type="subcellular location">
    <subcellularLocation>
        <location evidence="1">Endoplasmic reticulum membrane</location>
        <topology evidence="1">Single-pass type I membrane protein</topology>
    </subcellularLocation>
    <subcellularLocation>
        <location evidence="1">Nucleus membrane</location>
    </subcellularLocation>
</comment>
<comment type="domain">
    <text evidence="1">The proline-rich region is required for endoplasmic reticulum localization.</text>
</comment>
<comment type="similarity">
    <text evidence="3">Belongs to the shisa family.</text>
</comment>
<protein>
    <recommendedName>
        <fullName>Protein shisa-5</fullName>
    </recommendedName>
    <alternativeName>
        <fullName>Scotin</fullName>
    </alternativeName>
</protein>
<name>SHSA5_BOVIN</name>
<feature type="signal peptide" evidence="2">
    <location>
        <begin position="1"/>
        <end position="26"/>
    </location>
</feature>
<feature type="chain" id="PRO_0000312877" description="Protein shisa-5">
    <location>
        <begin position="27"/>
        <end position="216"/>
    </location>
</feature>
<feature type="topological domain" description="Extracellular" evidence="2">
    <location>
        <begin position="27"/>
        <end position="93"/>
    </location>
</feature>
<feature type="transmembrane region" description="Helical" evidence="2">
    <location>
        <begin position="94"/>
        <end position="114"/>
    </location>
</feature>
<feature type="topological domain" description="Cytoplasmic" evidence="2">
    <location>
        <begin position="115"/>
        <end position="216"/>
    </location>
</feature>
<proteinExistence type="evidence at transcript level"/>
<accession>Q3T0A9</accession>
<gene>
    <name type="primary">SHISA5</name>
    <name type="synonym">SCOTIN</name>
</gene>
<organism>
    <name type="scientific">Bos taurus</name>
    <name type="common">Bovine</name>
    <dbReference type="NCBI Taxonomy" id="9913"/>
    <lineage>
        <taxon>Eukaryota</taxon>
        <taxon>Metazoa</taxon>
        <taxon>Chordata</taxon>
        <taxon>Craniata</taxon>
        <taxon>Vertebrata</taxon>
        <taxon>Euteleostomi</taxon>
        <taxon>Mammalia</taxon>
        <taxon>Eutheria</taxon>
        <taxon>Laurasiatheria</taxon>
        <taxon>Artiodactyla</taxon>
        <taxon>Ruminantia</taxon>
        <taxon>Pecora</taxon>
        <taxon>Bovidae</taxon>
        <taxon>Bovinae</taxon>
        <taxon>Bos</taxon>
    </lineage>
</organism>
<evidence type="ECO:0000250" key="1"/>
<evidence type="ECO:0000255" key="2"/>
<evidence type="ECO:0000305" key="3"/>
<keyword id="KW-0053">Apoptosis</keyword>
<keyword id="KW-0256">Endoplasmic reticulum</keyword>
<keyword id="KW-0472">Membrane</keyword>
<keyword id="KW-0539">Nucleus</keyword>
<keyword id="KW-1185">Reference proteome</keyword>
<keyword id="KW-0732">Signal</keyword>
<keyword id="KW-0812">Transmembrane</keyword>
<keyword id="KW-1133">Transmembrane helix</keyword>
<reference key="1">
    <citation type="submission" date="2005-08" db="EMBL/GenBank/DDBJ databases">
        <authorList>
            <consortium name="NIH - Mammalian Gene Collection (MGC) project"/>
        </authorList>
    </citation>
    <scope>NUCLEOTIDE SEQUENCE [LARGE SCALE MRNA]</scope>
    <source>
        <strain>Crossbred X Angus</strain>
        <tissue>Ileum</tissue>
    </source>
</reference>